<sequence length="422" mass="46817">MVTIVLGSQWGDEGKGKITDYLSQDATLCCRSAGGHNAGHTIVHDSVTYDFHILPSGLVSPKCINLIGAGTVVHIPSFFKELSALADKGLVDVDSRVFISDRAHVCFDLHSVVDGLEEAKLGGRKVGTTGKGIGPCYSDKASRRGVRVGEILDEEVFERKLRNLESGYRSRFGELAYDVEDEINRFKEYRQKLKPYIVDQLSFLQKYKNDDRILVEGANALMLDLDHGTYPFVTSSSTGLGGAIQGLSLNPTKIKNIIGVVKAYTTRVGSGPFPTEQLNEFGEKLQVAGREFGVTTGRKRRCGWFDLVLCRYSLAVNHYTALNLTKLDILDDFDEIKVAVAYTLPDGTRLEDSYPADPNLIEKLEVEYITLPGWKTNTMGLTKYEDLPENAQKYVEYIERGLDGVPIKWIGTGPAREHLIIR</sequence>
<proteinExistence type="inferred from homology"/>
<name>PURA_TALSN</name>
<reference key="1">
    <citation type="journal article" date="2015" name="Genome Announc.">
        <title>Genome sequence of the AIDS-associated pathogen Penicillium marneffei (ATCC18224) and its near taxonomic relative Talaromyces stipitatus (ATCC10500).</title>
        <authorList>
            <person name="Nierman W.C."/>
            <person name="Fedorova-Abrams N.D."/>
            <person name="Andrianopoulos A."/>
        </authorList>
    </citation>
    <scope>NUCLEOTIDE SEQUENCE [LARGE SCALE GENOMIC DNA]</scope>
    <source>
        <strain>ATCC 10500 / CBS 375.48 / QM 6759 / NRRL 1006</strain>
    </source>
</reference>
<keyword id="KW-0963">Cytoplasm</keyword>
<keyword id="KW-0342">GTP-binding</keyword>
<keyword id="KW-0436">Ligase</keyword>
<keyword id="KW-0460">Magnesium</keyword>
<keyword id="KW-0479">Metal-binding</keyword>
<keyword id="KW-0547">Nucleotide-binding</keyword>
<keyword id="KW-0658">Purine biosynthesis</keyword>
<keyword id="KW-1185">Reference proteome</keyword>
<gene>
    <name type="ORF">TSTA_095260</name>
</gene>
<dbReference type="EC" id="6.3.4.4" evidence="2"/>
<dbReference type="EMBL" id="EQ962653">
    <property type="protein sequence ID" value="EED22280.1"/>
    <property type="molecule type" value="Genomic_DNA"/>
</dbReference>
<dbReference type="RefSeq" id="XP_002479243.1">
    <property type="nucleotide sequence ID" value="XM_002479198.1"/>
</dbReference>
<dbReference type="SMR" id="B8M3A8"/>
<dbReference type="FunCoup" id="B8M3A8">
    <property type="interactions" value="819"/>
</dbReference>
<dbReference type="STRING" id="441959.B8M3A8"/>
<dbReference type="GeneID" id="8103856"/>
<dbReference type="VEuPathDB" id="FungiDB:TSTA_095260"/>
<dbReference type="eggNOG" id="KOG1355">
    <property type="taxonomic scope" value="Eukaryota"/>
</dbReference>
<dbReference type="HOGENOM" id="CLU_029848_3_2_1"/>
<dbReference type="InParanoid" id="B8M3A8"/>
<dbReference type="OMA" id="FHHAKPI"/>
<dbReference type="OrthoDB" id="10265645at2759"/>
<dbReference type="PhylomeDB" id="B8M3A8"/>
<dbReference type="UniPathway" id="UPA00075">
    <property type="reaction ID" value="UER00335"/>
</dbReference>
<dbReference type="Proteomes" id="UP000001745">
    <property type="component" value="Unassembled WGS sequence"/>
</dbReference>
<dbReference type="GO" id="GO:0005737">
    <property type="term" value="C:cytoplasm"/>
    <property type="evidence" value="ECO:0007669"/>
    <property type="project" value="UniProtKB-SubCell"/>
</dbReference>
<dbReference type="GO" id="GO:0004019">
    <property type="term" value="F:adenylosuccinate synthase activity"/>
    <property type="evidence" value="ECO:0007669"/>
    <property type="project" value="UniProtKB-UniRule"/>
</dbReference>
<dbReference type="GO" id="GO:0016208">
    <property type="term" value="F:AMP binding"/>
    <property type="evidence" value="ECO:0007669"/>
    <property type="project" value="EnsemblFungi"/>
</dbReference>
<dbReference type="GO" id="GO:0019002">
    <property type="term" value="F:GMP binding"/>
    <property type="evidence" value="ECO:0007669"/>
    <property type="project" value="EnsemblFungi"/>
</dbReference>
<dbReference type="GO" id="GO:0005525">
    <property type="term" value="F:GTP binding"/>
    <property type="evidence" value="ECO:0007669"/>
    <property type="project" value="UniProtKB-UniRule"/>
</dbReference>
<dbReference type="GO" id="GO:0000287">
    <property type="term" value="F:magnesium ion binding"/>
    <property type="evidence" value="ECO:0007669"/>
    <property type="project" value="UniProtKB-UniRule"/>
</dbReference>
<dbReference type="GO" id="GO:0044208">
    <property type="term" value="P:'de novo' AMP biosynthetic process"/>
    <property type="evidence" value="ECO:0007669"/>
    <property type="project" value="UniProtKB-UniRule"/>
</dbReference>
<dbReference type="GO" id="GO:0071276">
    <property type="term" value="P:cellular response to cadmium ion"/>
    <property type="evidence" value="ECO:0007669"/>
    <property type="project" value="EnsemblFungi"/>
</dbReference>
<dbReference type="GO" id="GO:0046040">
    <property type="term" value="P:IMP metabolic process"/>
    <property type="evidence" value="ECO:0007669"/>
    <property type="project" value="TreeGrafter"/>
</dbReference>
<dbReference type="CDD" id="cd03108">
    <property type="entry name" value="AdSS"/>
    <property type="match status" value="1"/>
</dbReference>
<dbReference type="FunFam" id="3.90.170.10:FF:000001">
    <property type="entry name" value="Adenylosuccinate synthetase"/>
    <property type="match status" value="1"/>
</dbReference>
<dbReference type="FunFam" id="1.10.300.10:FF:000002">
    <property type="entry name" value="Adenylosuccinate synthetase, chloroplastic"/>
    <property type="match status" value="1"/>
</dbReference>
<dbReference type="Gene3D" id="3.40.440.10">
    <property type="entry name" value="Adenylosuccinate Synthetase, subunit A, domain 1"/>
    <property type="match status" value="1"/>
</dbReference>
<dbReference type="Gene3D" id="1.10.300.10">
    <property type="entry name" value="Adenylosuccinate Synthetase, subunit A, domain 2"/>
    <property type="match status" value="1"/>
</dbReference>
<dbReference type="Gene3D" id="3.90.170.10">
    <property type="entry name" value="Adenylosuccinate Synthetase, subunit A, domain 3"/>
    <property type="match status" value="1"/>
</dbReference>
<dbReference type="HAMAP" id="MF_00011">
    <property type="entry name" value="Adenylosucc_synth"/>
    <property type="match status" value="1"/>
</dbReference>
<dbReference type="InterPro" id="IPR018220">
    <property type="entry name" value="Adenylosuccin_syn_GTP-bd"/>
</dbReference>
<dbReference type="InterPro" id="IPR033128">
    <property type="entry name" value="Adenylosuccin_syn_Lys_AS"/>
</dbReference>
<dbReference type="InterPro" id="IPR042109">
    <property type="entry name" value="Adenylosuccinate_synth_dom1"/>
</dbReference>
<dbReference type="InterPro" id="IPR042110">
    <property type="entry name" value="Adenylosuccinate_synth_dom2"/>
</dbReference>
<dbReference type="InterPro" id="IPR042111">
    <property type="entry name" value="Adenylosuccinate_synth_dom3"/>
</dbReference>
<dbReference type="InterPro" id="IPR001114">
    <property type="entry name" value="Adenylosuccinate_synthetase"/>
</dbReference>
<dbReference type="InterPro" id="IPR027417">
    <property type="entry name" value="P-loop_NTPase"/>
</dbReference>
<dbReference type="NCBIfam" id="NF002223">
    <property type="entry name" value="PRK01117.1"/>
    <property type="match status" value="1"/>
</dbReference>
<dbReference type="NCBIfam" id="TIGR00184">
    <property type="entry name" value="purA"/>
    <property type="match status" value="1"/>
</dbReference>
<dbReference type="PANTHER" id="PTHR11846">
    <property type="entry name" value="ADENYLOSUCCINATE SYNTHETASE"/>
    <property type="match status" value="1"/>
</dbReference>
<dbReference type="PANTHER" id="PTHR11846:SF0">
    <property type="entry name" value="ADENYLOSUCCINATE SYNTHETASE"/>
    <property type="match status" value="1"/>
</dbReference>
<dbReference type="Pfam" id="PF00709">
    <property type="entry name" value="Adenylsucc_synt"/>
    <property type="match status" value="1"/>
</dbReference>
<dbReference type="SMART" id="SM00788">
    <property type="entry name" value="Adenylsucc_synt"/>
    <property type="match status" value="1"/>
</dbReference>
<dbReference type="SUPFAM" id="SSF52540">
    <property type="entry name" value="P-loop containing nucleoside triphosphate hydrolases"/>
    <property type="match status" value="1"/>
</dbReference>
<dbReference type="PROSITE" id="PS01266">
    <property type="entry name" value="ADENYLOSUCCIN_SYN_1"/>
    <property type="match status" value="1"/>
</dbReference>
<dbReference type="PROSITE" id="PS00513">
    <property type="entry name" value="ADENYLOSUCCIN_SYN_2"/>
    <property type="match status" value="1"/>
</dbReference>
<feature type="chain" id="PRO_0000399366" description="Adenylosuccinate synthetase">
    <location>
        <begin position="1"/>
        <end position="422"/>
    </location>
</feature>
<feature type="active site" description="Proton acceptor" evidence="2">
    <location>
        <position position="12"/>
    </location>
</feature>
<feature type="active site" description="Proton donor" evidence="2">
    <location>
        <position position="40"/>
    </location>
</feature>
<feature type="binding site" evidence="2">
    <location>
        <begin position="11"/>
        <end position="17"/>
    </location>
    <ligand>
        <name>GTP</name>
        <dbReference type="ChEBI" id="CHEBI:37565"/>
    </ligand>
</feature>
<feature type="binding site" description="in other chain" evidence="2">
    <location>
        <begin position="12"/>
        <end position="15"/>
    </location>
    <ligand>
        <name>IMP</name>
        <dbReference type="ChEBI" id="CHEBI:58053"/>
        <note>ligand shared between dimeric partners</note>
    </ligand>
</feature>
<feature type="binding site" evidence="2">
    <location>
        <position position="12"/>
    </location>
    <ligand>
        <name>Mg(2+)</name>
        <dbReference type="ChEBI" id="CHEBI:18420"/>
    </ligand>
</feature>
<feature type="binding site" description="in other chain" evidence="2">
    <location>
        <begin position="37"/>
        <end position="40"/>
    </location>
    <ligand>
        <name>IMP</name>
        <dbReference type="ChEBI" id="CHEBI:58053"/>
        <note>ligand shared between dimeric partners</note>
    </ligand>
</feature>
<feature type="binding site" evidence="2">
    <location>
        <begin position="39"/>
        <end position="41"/>
    </location>
    <ligand>
        <name>GTP</name>
        <dbReference type="ChEBI" id="CHEBI:37565"/>
    </ligand>
</feature>
<feature type="binding site" evidence="2">
    <location>
        <position position="39"/>
    </location>
    <ligand>
        <name>Mg(2+)</name>
        <dbReference type="ChEBI" id="CHEBI:18420"/>
    </ligand>
</feature>
<feature type="binding site" description="in other chain" evidence="2">
    <location>
        <position position="129"/>
    </location>
    <ligand>
        <name>IMP</name>
        <dbReference type="ChEBI" id="CHEBI:58053"/>
        <note>ligand shared between dimeric partners</note>
    </ligand>
</feature>
<feature type="binding site" evidence="2">
    <location>
        <position position="143"/>
    </location>
    <ligand>
        <name>IMP</name>
        <dbReference type="ChEBI" id="CHEBI:58053"/>
        <note>ligand shared between dimeric partners</note>
    </ligand>
</feature>
<feature type="binding site" description="in other chain" evidence="2">
    <location>
        <position position="219"/>
    </location>
    <ligand>
        <name>IMP</name>
        <dbReference type="ChEBI" id="CHEBI:58053"/>
        <note>ligand shared between dimeric partners</note>
    </ligand>
</feature>
<feature type="binding site" description="in other chain" evidence="2">
    <location>
        <position position="234"/>
    </location>
    <ligand>
        <name>IMP</name>
        <dbReference type="ChEBI" id="CHEBI:58053"/>
        <note>ligand shared between dimeric partners</note>
    </ligand>
</feature>
<feature type="binding site" evidence="2">
    <location>
        <begin position="294"/>
        <end position="300"/>
    </location>
    <ligand>
        <name>substrate</name>
    </ligand>
</feature>
<feature type="binding site" description="in other chain" evidence="2">
    <location>
        <position position="298"/>
    </location>
    <ligand>
        <name>IMP</name>
        <dbReference type="ChEBI" id="CHEBI:58053"/>
        <note>ligand shared between dimeric partners</note>
    </ligand>
</feature>
<feature type="binding site" evidence="2">
    <location>
        <position position="300"/>
    </location>
    <ligand>
        <name>GTP</name>
        <dbReference type="ChEBI" id="CHEBI:37565"/>
    </ligand>
</feature>
<feature type="binding site" evidence="2">
    <location>
        <begin position="326"/>
        <end position="328"/>
    </location>
    <ligand>
        <name>GTP</name>
        <dbReference type="ChEBI" id="CHEBI:37565"/>
    </ligand>
</feature>
<feature type="binding site" evidence="2">
    <location>
        <begin position="411"/>
        <end position="413"/>
    </location>
    <ligand>
        <name>GTP</name>
        <dbReference type="ChEBI" id="CHEBI:37565"/>
    </ligand>
</feature>
<comment type="function">
    <text evidence="1">Plays an important role in the de novo pathway and in the salvage pathway of purine nucleotide biosynthesis. Catalyzes the first committed step in the biosynthesis of AMP from IMP (By similarity).</text>
</comment>
<comment type="catalytic activity">
    <reaction evidence="2">
        <text>IMP + L-aspartate + GTP = N(6)-(1,2-dicarboxyethyl)-AMP + GDP + phosphate + 2 H(+)</text>
        <dbReference type="Rhea" id="RHEA:15753"/>
        <dbReference type="ChEBI" id="CHEBI:15378"/>
        <dbReference type="ChEBI" id="CHEBI:29991"/>
        <dbReference type="ChEBI" id="CHEBI:37565"/>
        <dbReference type="ChEBI" id="CHEBI:43474"/>
        <dbReference type="ChEBI" id="CHEBI:57567"/>
        <dbReference type="ChEBI" id="CHEBI:58053"/>
        <dbReference type="ChEBI" id="CHEBI:58189"/>
        <dbReference type="EC" id="6.3.4.4"/>
    </reaction>
</comment>
<comment type="cofactor">
    <cofactor evidence="2">
        <name>Mg(2+)</name>
        <dbReference type="ChEBI" id="CHEBI:18420"/>
    </cofactor>
    <text evidence="2">Binds 1 Mg(2+) ion per subunit.</text>
</comment>
<comment type="pathway">
    <text evidence="2">Purine metabolism; AMP biosynthesis via de novo pathway; AMP from IMP: step 1/2.</text>
</comment>
<comment type="subunit">
    <text evidence="2">Homodimer.</text>
</comment>
<comment type="subcellular location">
    <subcellularLocation>
        <location evidence="2">Cytoplasm</location>
    </subcellularLocation>
</comment>
<comment type="similarity">
    <text evidence="2">Belongs to the adenylosuccinate synthetase family.</text>
</comment>
<protein>
    <recommendedName>
        <fullName evidence="2">Adenylosuccinate synthetase</fullName>
        <shortName evidence="2">AMPSase</shortName>
        <shortName evidence="2">AdSS</shortName>
        <ecNumber evidence="2">6.3.4.4</ecNumber>
    </recommendedName>
    <alternativeName>
        <fullName evidence="2">IMP--aspartate ligase</fullName>
    </alternativeName>
</protein>
<accession>B8M3A8</accession>
<organism>
    <name type="scientific">Talaromyces stipitatus (strain ATCC 10500 / CBS 375.48 / QM 6759 / NRRL 1006)</name>
    <name type="common">Penicillium stipitatum</name>
    <dbReference type="NCBI Taxonomy" id="441959"/>
    <lineage>
        <taxon>Eukaryota</taxon>
        <taxon>Fungi</taxon>
        <taxon>Dikarya</taxon>
        <taxon>Ascomycota</taxon>
        <taxon>Pezizomycotina</taxon>
        <taxon>Eurotiomycetes</taxon>
        <taxon>Eurotiomycetidae</taxon>
        <taxon>Eurotiales</taxon>
        <taxon>Trichocomaceae</taxon>
        <taxon>Talaromyces</taxon>
        <taxon>Talaromyces sect. Talaromyces</taxon>
    </lineage>
</organism>
<evidence type="ECO:0000250" key="1"/>
<evidence type="ECO:0000255" key="2">
    <source>
        <dbReference type="HAMAP-Rule" id="MF_03125"/>
    </source>
</evidence>